<comment type="catalytic activity">
    <reaction evidence="1">
        <text>2 reduced [2Fe-2S]-[ferredoxin] + NADP(+) + H(+) = 2 oxidized [2Fe-2S]-[ferredoxin] + NADPH</text>
        <dbReference type="Rhea" id="RHEA:20125"/>
        <dbReference type="Rhea" id="RHEA-COMP:10000"/>
        <dbReference type="Rhea" id="RHEA-COMP:10001"/>
        <dbReference type="ChEBI" id="CHEBI:15378"/>
        <dbReference type="ChEBI" id="CHEBI:33737"/>
        <dbReference type="ChEBI" id="CHEBI:33738"/>
        <dbReference type="ChEBI" id="CHEBI:57783"/>
        <dbReference type="ChEBI" id="CHEBI:58349"/>
        <dbReference type="EC" id="1.18.1.2"/>
    </reaction>
</comment>
<comment type="cofactor">
    <cofactor evidence="1">
        <name>FAD</name>
        <dbReference type="ChEBI" id="CHEBI:57692"/>
    </cofactor>
    <text evidence="1">Binds 1 FAD per subunit.</text>
</comment>
<comment type="subunit">
    <text evidence="1">Homodimer.</text>
</comment>
<comment type="similarity">
    <text evidence="1">Belongs to the ferredoxin--NADP reductase type 2 family.</text>
</comment>
<evidence type="ECO:0000255" key="1">
    <source>
        <dbReference type="HAMAP-Rule" id="MF_01685"/>
    </source>
</evidence>
<name>FENR_LACDB</name>
<reference key="1">
    <citation type="journal article" date="2006" name="Proc. Natl. Acad. Sci. U.S.A.">
        <title>Comparative genomics of the lactic acid bacteria.</title>
        <authorList>
            <person name="Makarova K.S."/>
            <person name="Slesarev A."/>
            <person name="Wolf Y.I."/>
            <person name="Sorokin A."/>
            <person name="Mirkin B."/>
            <person name="Koonin E.V."/>
            <person name="Pavlov A."/>
            <person name="Pavlova N."/>
            <person name="Karamychev V."/>
            <person name="Polouchine N."/>
            <person name="Shakhova V."/>
            <person name="Grigoriev I."/>
            <person name="Lou Y."/>
            <person name="Rohksar D."/>
            <person name="Lucas S."/>
            <person name="Huang K."/>
            <person name="Goodstein D.M."/>
            <person name="Hawkins T."/>
            <person name="Plengvidhya V."/>
            <person name="Welker D."/>
            <person name="Hughes J."/>
            <person name="Goh Y."/>
            <person name="Benson A."/>
            <person name="Baldwin K."/>
            <person name="Lee J.-H."/>
            <person name="Diaz-Muniz I."/>
            <person name="Dosti B."/>
            <person name="Smeianov V."/>
            <person name="Wechter W."/>
            <person name="Barabote R."/>
            <person name="Lorca G."/>
            <person name="Altermann E."/>
            <person name="Barrangou R."/>
            <person name="Ganesan B."/>
            <person name="Xie Y."/>
            <person name="Rawsthorne H."/>
            <person name="Tamir D."/>
            <person name="Parker C."/>
            <person name="Breidt F."/>
            <person name="Broadbent J.R."/>
            <person name="Hutkins R."/>
            <person name="O'Sullivan D."/>
            <person name="Steele J."/>
            <person name="Unlu G."/>
            <person name="Saier M.H. Jr."/>
            <person name="Klaenhammer T."/>
            <person name="Richardson P."/>
            <person name="Kozyavkin S."/>
            <person name="Weimer B.C."/>
            <person name="Mills D.A."/>
        </authorList>
    </citation>
    <scope>NUCLEOTIDE SEQUENCE [LARGE SCALE GENOMIC DNA]</scope>
    <source>
        <strain>ATCC BAA-365 / Lb-18</strain>
    </source>
</reference>
<gene>
    <name type="ordered locus">LBUL_1466</name>
</gene>
<proteinExistence type="inferred from homology"/>
<organism>
    <name type="scientific">Lactobacillus delbrueckii subsp. bulgaricus (strain ATCC BAA-365 / Lb-18)</name>
    <dbReference type="NCBI Taxonomy" id="321956"/>
    <lineage>
        <taxon>Bacteria</taxon>
        <taxon>Bacillati</taxon>
        <taxon>Bacillota</taxon>
        <taxon>Bacilli</taxon>
        <taxon>Lactobacillales</taxon>
        <taxon>Lactobacillaceae</taxon>
        <taxon>Lactobacillus</taxon>
    </lineage>
</organism>
<accession>Q049B3</accession>
<dbReference type="EC" id="1.18.1.2" evidence="1"/>
<dbReference type="EMBL" id="CP000412">
    <property type="protein sequence ID" value="ABJ58959.1"/>
    <property type="molecule type" value="Genomic_DNA"/>
</dbReference>
<dbReference type="RefSeq" id="WP_003623767.1">
    <property type="nucleotide sequence ID" value="NC_008529.1"/>
</dbReference>
<dbReference type="SMR" id="Q049B3"/>
<dbReference type="KEGG" id="lbu:LBUL_1466"/>
<dbReference type="HOGENOM" id="CLU_031864_5_5_9"/>
<dbReference type="BioCyc" id="LDEL321956:LBUL_RS06925-MONOMER"/>
<dbReference type="GO" id="GO:0004324">
    <property type="term" value="F:ferredoxin-NADP+ reductase activity"/>
    <property type="evidence" value="ECO:0007669"/>
    <property type="project" value="UniProtKB-UniRule"/>
</dbReference>
<dbReference type="GO" id="GO:0050660">
    <property type="term" value="F:flavin adenine dinucleotide binding"/>
    <property type="evidence" value="ECO:0007669"/>
    <property type="project" value="UniProtKB-UniRule"/>
</dbReference>
<dbReference type="GO" id="GO:0050661">
    <property type="term" value="F:NADP binding"/>
    <property type="evidence" value="ECO:0007669"/>
    <property type="project" value="UniProtKB-UniRule"/>
</dbReference>
<dbReference type="Gene3D" id="3.50.50.60">
    <property type="entry name" value="FAD/NAD(P)-binding domain"/>
    <property type="match status" value="2"/>
</dbReference>
<dbReference type="HAMAP" id="MF_01685">
    <property type="entry name" value="FENR2"/>
    <property type="match status" value="1"/>
</dbReference>
<dbReference type="InterPro" id="IPR036188">
    <property type="entry name" value="FAD/NAD-bd_sf"/>
</dbReference>
<dbReference type="InterPro" id="IPR023753">
    <property type="entry name" value="FAD/NAD-binding_dom"/>
</dbReference>
<dbReference type="InterPro" id="IPR022890">
    <property type="entry name" value="Fd--NADP_Rdtase_type_2"/>
</dbReference>
<dbReference type="InterPro" id="IPR050097">
    <property type="entry name" value="Ferredoxin-NADP_redctase_2"/>
</dbReference>
<dbReference type="PANTHER" id="PTHR48105">
    <property type="entry name" value="THIOREDOXIN REDUCTASE 1-RELATED-RELATED"/>
    <property type="match status" value="1"/>
</dbReference>
<dbReference type="Pfam" id="PF07992">
    <property type="entry name" value="Pyr_redox_2"/>
    <property type="match status" value="1"/>
</dbReference>
<dbReference type="PRINTS" id="PR00368">
    <property type="entry name" value="FADPNR"/>
</dbReference>
<dbReference type="PRINTS" id="PR00469">
    <property type="entry name" value="PNDRDTASEII"/>
</dbReference>
<dbReference type="SUPFAM" id="SSF51905">
    <property type="entry name" value="FAD/NAD(P)-binding domain"/>
    <property type="match status" value="1"/>
</dbReference>
<keyword id="KW-0274">FAD</keyword>
<keyword id="KW-0285">Flavoprotein</keyword>
<keyword id="KW-0521">NADP</keyword>
<keyword id="KW-0560">Oxidoreductase</keyword>
<sequence>MIGAGPVGLFAAYFAHLHGLKTVILESLNEPGGQPEMLYPFKKILDIPVFNEITAADLTKRLLANLTDQDLVTGHKVSQLEKTDEFVIDGEYQVRSIIVATGNGAFKAKKFPLKATPEAEDHIHYFFKNPDLFAGQKIGIFGGGDTALDWAQELSQIADVTLVHRRDQFRGMESSVENLKADQKVTLKTPYLPKSMQVEKGQLEISLKMVGGDEVTQETFDQILVAYGFRADNRFVSKWGVDLDQGLIAVDRSMQTSVPGIYAIGDSCGYPGRVPVIGIGFGEAQIAVNAIMQDLFPEKSLTIHSTSI</sequence>
<protein>
    <recommendedName>
        <fullName evidence="1">Ferredoxin--NADP reductase</fullName>
        <shortName evidence="1">FNR</shortName>
        <shortName evidence="1">Fd-NADP(+) reductase</shortName>
        <ecNumber evidence="1">1.18.1.2</ecNumber>
    </recommendedName>
</protein>
<feature type="chain" id="PRO_0000364852" description="Ferredoxin--NADP reductase">
    <location>
        <begin position="1"/>
        <end position="308"/>
    </location>
</feature>
<feature type="binding site" evidence="1">
    <location>
        <position position="26"/>
    </location>
    <ligand>
        <name>FAD</name>
        <dbReference type="ChEBI" id="CHEBI:57692"/>
    </ligand>
</feature>
<feature type="binding site" evidence="1">
    <location>
        <position position="34"/>
    </location>
    <ligand>
        <name>FAD</name>
        <dbReference type="ChEBI" id="CHEBI:57692"/>
    </ligand>
</feature>
<feature type="binding site" evidence="1">
    <location>
        <position position="39"/>
    </location>
    <ligand>
        <name>FAD</name>
        <dbReference type="ChEBI" id="CHEBI:57692"/>
    </ligand>
</feature>
<feature type="binding site" evidence="1">
    <location>
        <position position="77"/>
    </location>
    <ligand>
        <name>FAD</name>
        <dbReference type="ChEBI" id="CHEBI:57692"/>
    </ligand>
</feature>
<feature type="binding site" evidence="1">
    <location>
        <position position="106"/>
    </location>
    <ligand>
        <name>FAD</name>
        <dbReference type="ChEBI" id="CHEBI:57692"/>
    </ligand>
</feature>
<feature type="binding site" evidence="1">
    <location>
        <position position="266"/>
    </location>
    <ligand>
        <name>FAD</name>
        <dbReference type="ChEBI" id="CHEBI:57692"/>
    </ligand>
</feature>
<feature type="binding site" evidence="1">
    <location>
        <position position="306"/>
    </location>
    <ligand>
        <name>FAD</name>
        <dbReference type="ChEBI" id="CHEBI:57692"/>
    </ligand>
</feature>